<evidence type="ECO:0000255" key="1">
    <source>
        <dbReference type="HAMAP-Rule" id="MF_00052"/>
    </source>
</evidence>
<evidence type="ECO:0000255" key="2">
    <source>
        <dbReference type="PROSITE-ProRule" id="PRU01319"/>
    </source>
</evidence>
<keyword id="KW-0963">Cytoplasm</keyword>
<keyword id="KW-0255">Endonuclease</keyword>
<keyword id="KW-0378">Hydrolase</keyword>
<keyword id="KW-0464">Manganese</keyword>
<keyword id="KW-0479">Metal-binding</keyword>
<keyword id="KW-0540">Nuclease</keyword>
<comment type="function">
    <text evidence="1">Endonuclease that specifically degrades the RNA of RNA-DNA hybrids.</text>
</comment>
<comment type="catalytic activity">
    <reaction evidence="1">
        <text>Endonucleolytic cleavage to 5'-phosphomonoester.</text>
        <dbReference type="EC" id="3.1.26.4"/>
    </reaction>
</comment>
<comment type="cofactor">
    <cofactor evidence="1">
        <name>Mn(2+)</name>
        <dbReference type="ChEBI" id="CHEBI:29035"/>
    </cofactor>
    <cofactor evidence="1">
        <name>Mg(2+)</name>
        <dbReference type="ChEBI" id="CHEBI:18420"/>
    </cofactor>
    <text evidence="1">Manganese or magnesium. Binds 1 divalent metal ion per monomer in the absence of substrate. May bind a second metal ion after substrate binding.</text>
</comment>
<comment type="subcellular location">
    <subcellularLocation>
        <location evidence="1">Cytoplasm</location>
    </subcellularLocation>
</comment>
<comment type="similarity">
    <text evidence="1">Belongs to the RNase HII family.</text>
</comment>
<feature type="chain" id="PRO_1000194445" description="Ribonuclease HII">
    <location>
        <begin position="1"/>
        <end position="212"/>
    </location>
</feature>
<feature type="domain" description="RNase H type-2" evidence="2">
    <location>
        <begin position="17"/>
        <end position="211"/>
    </location>
</feature>
<feature type="binding site" evidence="1">
    <location>
        <position position="23"/>
    </location>
    <ligand>
        <name>a divalent metal cation</name>
        <dbReference type="ChEBI" id="CHEBI:60240"/>
    </ligand>
</feature>
<feature type="binding site" evidence="1">
    <location>
        <position position="24"/>
    </location>
    <ligand>
        <name>a divalent metal cation</name>
        <dbReference type="ChEBI" id="CHEBI:60240"/>
    </ligand>
</feature>
<feature type="binding site" evidence="1">
    <location>
        <position position="120"/>
    </location>
    <ligand>
        <name>a divalent metal cation</name>
        <dbReference type="ChEBI" id="CHEBI:60240"/>
    </ligand>
</feature>
<organism>
    <name type="scientific">Chloroflexus aggregans (strain MD-66 / DSM 9485)</name>
    <dbReference type="NCBI Taxonomy" id="326427"/>
    <lineage>
        <taxon>Bacteria</taxon>
        <taxon>Bacillati</taxon>
        <taxon>Chloroflexota</taxon>
        <taxon>Chloroflexia</taxon>
        <taxon>Chloroflexales</taxon>
        <taxon>Chloroflexineae</taxon>
        <taxon>Chloroflexaceae</taxon>
        <taxon>Chloroflexus</taxon>
    </lineage>
</organism>
<protein>
    <recommendedName>
        <fullName evidence="1">Ribonuclease HII</fullName>
        <shortName evidence="1">RNase HII</shortName>
        <ecNumber evidence="1">3.1.26.4</ecNumber>
    </recommendedName>
</protein>
<gene>
    <name evidence="1" type="primary">rnhB</name>
    <name type="ordered locus">Cagg_1844</name>
</gene>
<accession>B8GBB1</accession>
<dbReference type="EC" id="3.1.26.4" evidence="1"/>
<dbReference type="EMBL" id="CP001337">
    <property type="protein sequence ID" value="ACL24739.1"/>
    <property type="molecule type" value="Genomic_DNA"/>
</dbReference>
<dbReference type="RefSeq" id="WP_015940598.1">
    <property type="nucleotide sequence ID" value="NC_011831.1"/>
</dbReference>
<dbReference type="SMR" id="B8GBB1"/>
<dbReference type="STRING" id="326427.Cagg_1844"/>
<dbReference type="KEGG" id="cag:Cagg_1844"/>
<dbReference type="eggNOG" id="COG0164">
    <property type="taxonomic scope" value="Bacteria"/>
</dbReference>
<dbReference type="HOGENOM" id="CLU_036532_3_2_0"/>
<dbReference type="OrthoDB" id="9803420at2"/>
<dbReference type="Proteomes" id="UP000002508">
    <property type="component" value="Chromosome"/>
</dbReference>
<dbReference type="GO" id="GO:0005737">
    <property type="term" value="C:cytoplasm"/>
    <property type="evidence" value="ECO:0007669"/>
    <property type="project" value="UniProtKB-SubCell"/>
</dbReference>
<dbReference type="GO" id="GO:0032299">
    <property type="term" value="C:ribonuclease H2 complex"/>
    <property type="evidence" value="ECO:0007669"/>
    <property type="project" value="TreeGrafter"/>
</dbReference>
<dbReference type="GO" id="GO:0030145">
    <property type="term" value="F:manganese ion binding"/>
    <property type="evidence" value="ECO:0007669"/>
    <property type="project" value="UniProtKB-UniRule"/>
</dbReference>
<dbReference type="GO" id="GO:0003723">
    <property type="term" value="F:RNA binding"/>
    <property type="evidence" value="ECO:0007669"/>
    <property type="project" value="InterPro"/>
</dbReference>
<dbReference type="GO" id="GO:0004523">
    <property type="term" value="F:RNA-DNA hybrid ribonuclease activity"/>
    <property type="evidence" value="ECO:0007669"/>
    <property type="project" value="UniProtKB-UniRule"/>
</dbReference>
<dbReference type="GO" id="GO:0043137">
    <property type="term" value="P:DNA replication, removal of RNA primer"/>
    <property type="evidence" value="ECO:0007669"/>
    <property type="project" value="TreeGrafter"/>
</dbReference>
<dbReference type="GO" id="GO:0006298">
    <property type="term" value="P:mismatch repair"/>
    <property type="evidence" value="ECO:0007669"/>
    <property type="project" value="TreeGrafter"/>
</dbReference>
<dbReference type="CDD" id="cd07182">
    <property type="entry name" value="RNase_HII_bacteria_HII_like"/>
    <property type="match status" value="1"/>
</dbReference>
<dbReference type="Gene3D" id="3.30.420.10">
    <property type="entry name" value="Ribonuclease H-like superfamily/Ribonuclease H"/>
    <property type="match status" value="1"/>
</dbReference>
<dbReference type="HAMAP" id="MF_00052_B">
    <property type="entry name" value="RNase_HII_B"/>
    <property type="match status" value="1"/>
</dbReference>
<dbReference type="InterPro" id="IPR022898">
    <property type="entry name" value="RNase_HII"/>
</dbReference>
<dbReference type="InterPro" id="IPR001352">
    <property type="entry name" value="RNase_HII/HIII"/>
</dbReference>
<dbReference type="InterPro" id="IPR024567">
    <property type="entry name" value="RNase_HII/HIII_dom"/>
</dbReference>
<dbReference type="InterPro" id="IPR012337">
    <property type="entry name" value="RNaseH-like_sf"/>
</dbReference>
<dbReference type="InterPro" id="IPR036397">
    <property type="entry name" value="RNaseH_sf"/>
</dbReference>
<dbReference type="NCBIfam" id="NF000595">
    <property type="entry name" value="PRK00015.1-3"/>
    <property type="match status" value="1"/>
</dbReference>
<dbReference type="PANTHER" id="PTHR10954">
    <property type="entry name" value="RIBONUCLEASE H2 SUBUNIT A"/>
    <property type="match status" value="1"/>
</dbReference>
<dbReference type="PANTHER" id="PTHR10954:SF18">
    <property type="entry name" value="RIBONUCLEASE HII"/>
    <property type="match status" value="1"/>
</dbReference>
<dbReference type="Pfam" id="PF01351">
    <property type="entry name" value="RNase_HII"/>
    <property type="match status" value="1"/>
</dbReference>
<dbReference type="SUPFAM" id="SSF53098">
    <property type="entry name" value="Ribonuclease H-like"/>
    <property type="match status" value="1"/>
</dbReference>
<dbReference type="PROSITE" id="PS51975">
    <property type="entry name" value="RNASE_H_2"/>
    <property type="match status" value="1"/>
</dbReference>
<proteinExistence type="inferred from homology"/>
<sequence length="212" mass="22970">MSPDLSIEQTLLARGYRVLAGIDEAGRGCWAGPVVAAAVVLAPIVYERPGLLDAVDDSKQLTAVARERAYTLVQRYARGIGVGTVPAFLVDAYGILPATRLAMTLALLSLPCSVDALLIDAERLPGIRVPQESLVRGDARSLSIAAASIIAKVTRDRLMQTADRCYPQYGFALHKGYGTPVHRRALRQYGPSPFHRRTFQPVLELLDLTDSS</sequence>
<reference key="1">
    <citation type="submission" date="2008-12" db="EMBL/GenBank/DDBJ databases">
        <title>Complete sequence of Chloroflexus aggregans DSM 9485.</title>
        <authorList>
            <consortium name="US DOE Joint Genome Institute"/>
            <person name="Lucas S."/>
            <person name="Copeland A."/>
            <person name="Lapidus A."/>
            <person name="Glavina del Rio T."/>
            <person name="Dalin E."/>
            <person name="Tice H."/>
            <person name="Pitluck S."/>
            <person name="Foster B."/>
            <person name="Larimer F."/>
            <person name="Land M."/>
            <person name="Hauser L."/>
            <person name="Kyrpides N."/>
            <person name="Mikhailova N."/>
            <person name="Bryant D.A."/>
            <person name="Richardson P."/>
        </authorList>
    </citation>
    <scope>NUCLEOTIDE SEQUENCE [LARGE SCALE GENOMIC DNA]</scope>
    <source>
        <strain>MD-66 / DSM 9485</strain>
    </source>
</reference>
<name>RNH2_CHLAD</name>